<name>PPOX_MACFA</name>
<keyword id="KW-0274">FAD</keyword>
<keyword id="KW-0285">Flavoprotein</keyword>
<keyword id="KW-0350">Heme biosynthesis</keyword>
<keyword id="KW-0472">Membrane</keyword>
<keyword id="KW-0496">Mitochondrion</keyword>
<keyword id="KW-0999">Mitochondrion inner membrane</keyword>
<keyword id="KW-0560">Oxidoreductase</keyword>
<keyword id="KW-0627">Porphyrin biosynthesis</keyword>
<keyword id="KW-1185">Reference proteome</keyword>
<sequence>MGRTVVVLGGGISGLAASYHLSRAPCPPKVVLVEGSERLGGWIRSVRGPNGAIFELGPRGIRPAGALGARTLLLVSELGLDSEVLPVRGDHPAAQNRFLYVGGALHALPTGLRGLLRPSPPFSKPLFWAGLRELTKPRGKEPDETVHSFAQRRLGPEVASLAMDSLCRGVFAGNSRELSIRSCFPSLFQAEQTHRSVLLGLLLGAGRTPQPDSALIRQALAERWSQWSLRGGLEMLPQALETHLTSRGVSVLRGQPVCGLSLQAEGRWKVSLRDSSLEADHVISAIPASVLSELLPAEAAPLARALSAITAVSVAVVNLQYQGAHLPVQGFGHLVPSSEDPGVLGIVYDSVAFPEQDGSPPGLRVTVMLGGSWLQTLEASGCVLSQELFQQRAQEAAAAQLGLKELPSHCLVHLHKNCIPQYTLGHWQKLESARQFLAAHRLPLTLAGASYEGVAVNDCIESGRQAAVSVLGTEPNG</sequence>
<accession>Q60HD5</accession>
<proteinExistence type="evidence at transcript level"/>
<reference key="1">
    <citation type="submission" date="2003-10" db="EMBL/GenBank/DDBJ databases">
        <title>Isolation and characterization of cDNA for macaque neurological disease genes.</title>
        <authorList>
            <person name="Kusuda J."/>
            <person name="Osada N."/>
            <person name="Tanuma R."/>
            <person name="Hirata M."/>
            <person name="Sugano S."/>
            <person name="Hashimoto K."/>
        </authorList>
    </citation>
    <scope>NUCLEOTIDE SEQUENCE [LARGE SCALE MRNA]</scope>
    <source>
        <tissue>Brain cortex</tissue>
    </source>
</reference>
<feature type="chain" id="PRO_0000135271" description="Protoporphyrinogen oxidase">
    <location>
        <begin position="1"/>
        <end position="477"/>
    </location>
</feature>
<feature type="binding site" evidence="1">
    <location>
        <begin position="9"/>
        <end position="14"/>
    </location>
    <ligand>
        <name>FAD</name>
        <dbReference type="ChEBI" id="CHEBI:57692"/>
    </ligand>
</feature>
<feature type="binding site" evidence="1">
    <location>
        <position position="42"/>
    </location>
    <ligand>
        <name>FAD</name>
        <dbReference type="ChEBI" id="CHEBI:57692"/>
    </ligand>
</feature>
<feature type="binding site" evidence="1">
    <location>
        <begin position="57"/>
        <end position="60"/>
    </location>
    <ligand>
        <name>FAD</name>
        <dbReference type="ChEBI" id="CHEBI:57692"/>
    </ligand>
</feature>
<feature type="binding site" evidence="1">
    <location>
        <position position="257"/>
    </location>
    <ligand>
        <name>FAD</name>
        <dbReference type="ChEBI" id="CHEBI:57692"/>
    </ligand>
</feature>
<feature type="binding site" evidence="1">
    <location>
        <position position="449"/>
    </location>
    <ligand>
        <name>FAD</name>
        <dbReference type="ChEBI" id="CHEBI:57692"/>
    </ligand>
</feature>
<feature type="binding site" evidence="1">
    <location>
        <begin position="454"/>
        <end position="456"/>
    </location>
    <ligand>
        <name>FAD</name>
        <dbReference type="ChEBI" id="CHEBI:57692"/>
    </ligand>
</feature>
<gene>
    <name type="primary">PPOX</name>
    <name type="ORF">QccE-13968</name>
</gene>
<organism>
    <name type="scientific">Macaca fascicularis</name>
    <name type="common">Crab-eating macaque</name>
    <name type="synonym">Cynomolgus monkey</name>
    <dbReference type="NCBI Taxonomy" id="9541"/>
    <lineage>
        <taxon>Eukaryota</taxon>
        <taxon>Metazoa</taxon>
        <taxon>Chordata</taxon>
        <taxon>Craniata</taxon>
        <taxon>Vertebrata</taxon>
        <taxon>Euteleostomi</taxon>
        <taxon>Mammalia</taxon>
        <taxon>Eutheria</taxon>
        <taxon>Euarchontoglires</taxon>
        <taxon>Primates</taxon>
        <taxon>Haplorrhini</taxon>
        <taxon>Catarrhini</taxon>
        <taxon>Cercopithecidae</taxon>
        <taxon>Cercopithecinae</taxon>
        <taxon>Macaca</taxon>
    </lineage>
</organism>
<comment type="function">
    <text evidence="1">Catalyzes the 6-electron oxidation of protoporphyrinogen-IX to form protoporphyrin-IX.</text>
</comment>
<comment type="catalytic activity">
    <reaction evidence="1">
        <text>protoporphyrinogen IX + 3 O2 = protoporphyrin IX + 3 H2O2</text>
        <dbReference type="Rhea" id="RHEA:25576"/>
        <dbReference type="ChEBI" id="CHEBI:15379"/>
        <dbReference type="ChEBI" id="CHEBI:16240"/>
        <dbReference type="ChEBI" id="CHEBI:57306"/>
        <dbReference type="ChEBI" id="CHEBI:57307"/>
        <dbReference type="EC" id="1.3.3.4"/>
    </reaction>
</comment>
<comment type="cofactor">
    <cofactor evidence="1">
        <name>FAD</name>
        <dbReference type="ChEBI" id="CHEBI:57692"/>
    </cofactor>
    <text evidence="1">Binds 1 FAD per subunit.</text>
</comment>
<comment type="pathway">
    <text evidence="1">Porphyrin-containing compound metabolism; protoporphyrin-IX biosynthesis; protoporphyrin-IX from protoporphyrinogen-IX: step 1/1.</text>
</comment>
<comment type="subunit">
    <text evidence="1">Monomer. Homodimer.</text>
</comment>
<comment type="subcellular location">
    <subcellularLocation>
        <location evidence="2">Mitochondrion inner membrane</location>
        <topology evidence="2">Peripheral membrane protein</topology>
        <orientation evidence="2">Intermembrane side</orientation>
    </subcellularLocation>
</comment>
<comment type="similarity">
    <text evidence="3">Belongs to the protoporphyrinogen/coproporphyrinogen oxidase family. Protoporphyrinogen oxidase subfamily.</text>
</comment>
<protein>
    <recommendedName>
        <fullName>Protoporphyrinogen oxidase</fullName>
        <shortName>PPO</shortName>
        <ecNumber>1.3.3.4</ecNumber>
    </recommendedName>
</protein>
<evidence type="ECO:0000250" key="1">
    <source>
        <dbReference type="UniProtKB" id="P50336"/>
    </source>
</evidence>
<evidence type="ECO:0000250" key="2">
    <source>
        <dbReference type="UniProtKB" id="P51175"/>
    </source>
</evidence>
<evidence type="ECO:0000305" key="3"/>
<dbReference type="EC" id="1.3.3.4"/>
<dbReference type="EMBL" id="AB125192">
    <property type="protein sequence ID" value="BAD51980.1"/>
    <property type="molecule type" value="mRNA"/>
</dbReference>
<dbReference type="SMR" id="Q60HD5"/>
<dbReference type="STRING" id="9541.ENSMFAP00000042429"/>
<dbReference type="eggNOG" id="KOG1276">
    <property type="taxonomic scope" value="Eukaryota"/>
</dbReference>
<dbReference type="UniPathway" id="UPA00251">
    <property type="reaction ID" value="UER00324"/>
</dbReference>
<dbReference type="Proteomes" id="UP000233100">
    <property type="component" value="Unplaced"/>
</dbReference>
<dbReference type="GO" id="GO:0005743">
    <property type="term" value="C:mitochondrial inner membrane"/>
    <property type="evidence" value="ECO:0000250"/>
    <property type="project" value="UniProtKB"/>
</dbReference>
<dbReference type="GO" id="GO:0031966">
    <property type="term" value="C:mitochondrial membrane"/>
    <property type="evidence" value="ECO:0000250"/>
    <property type="project" value="UniProtKB"/>
</dbReference>
<dbReference type="GO" id="GO:0004729">
    <property type="term" value="F:oxygen-dependent protoporphyrinogen oxidase activity"/>
    <property type="evidence" value="ECO:0000250"/>
    <property type="project" value="UniProtKB"/>
</dbReference>
<dbReference type="GO" id="GO:0006783">
    <property type="term" value="P:heme biosynthetic process"/>
    <property type="evidence" value="ECO:0000250"/>
    <property type="project" value="UniProtKB"/>
</dbReference>
<dbReference type="GO" id="GO:0006779">
    <property type="term" value="P:porphyrin-containing compound biosynthetic process"/>
    <property type="evidence" value="ECO:0000250"/>
    <property type="project" value="UniProtKB"/>
</dbReference>
<dbReference type="GO" id="GO:0006782">
    <property type="term" value="P:protoporphyrinogen IX biosynthetic process"/>
    <property type="evidence" value="ECO:0007669"/>
    <property type="project" value="UniProtKB-UniPathway"/>
</dbReference>
<dbReference type="FunFam" id="3.50.50.60:FF:000133">
    <property type="entry name" value="Protoporphyrinogen oxidase"/>
    <property type="match status" value="1"/>
</dbReference>
<dbReference type="Gene3D" id="3.50.50.60">
    <property type="entry name" value="FAD/NAD(P)-binding domain"/>
    <property type="match status" value="1"/>
</dbReference>
<dbReference type="InterPro" id="IPR002937">
    <property type="entry name" value="Amino_oxidase"/>
</dbReference>
<dbReference type="InterPro" id="IPR036188">
    <property type="entry name" value="FAD/NAD-bd_sf"/>
</dbReference>
<dbReference type="InterPro" id="IPR004572">
    <property type="entry name" value="Protoporphyrinogen_oxidase"/>
</dbReference>
<dbReference type="InterPro" id="IPR050464">
    <property type="entry name" value="Zeta_carotene_desat/Oxidored"/>
</dbReference>
<dbReference type="NCBIfam" id="TIGR00562">
    <property type="entry name" value="proto_IX_ox"/>
    <property type="match status" value="1"/>
</dbReference>
<dbReference type="PANTHER" id="PTHR42923">
    <property type="entry name" value="PROTOPORPHYRINOGEN OXIDASE"/>
    <property type="match status" value="1"/>
</dbReference>
<dbReference type="PANTHER" id="PTHR42923:SF3">
    <property type="entry name" value="PROTOPORPHYRINOGEN OXIDASE"/>
    <property type="match status" value="1"/>
</dbReference>
<dbReference type="Pfam" id="PF01593">
    <property type="entry name" value="Amino_oxidase"/>
    <property type="match status" value="1"/>
</dbReference>
<dbReference type="SUPFAM" id="SSF54373">
    <property type="entry name" value="FAD-linked reductases, C-terminal domain"/>
    <property type="match status" value="1"/>
</dbReference>
<dbReference type="SUPFAM" id="SSF51905">
    <property type="entry name" value="FAD/NAD(P)-binding domain"/>
    <property type="match status" value="1"/>
</dbReference>